<keyword id="KW-0880">Kelch repeat</keyword>
<keyword id="KW-1185">Reference proteome</keyword>
<keyword id="KW-0677">Repeat</keyword>
<dbReference type="EMBL" id="AB022219">
    <property type="protein sequence ID" value="BAB02042.1"/>
    <property type="status" value="ALT_INIT"/>
    <property type="molecule type" value="Genomic_DNA"/>
</dbReference>
<dbReference type="EMBL" id="CP002686">
    <property type="protein sequence ID" value="AEE75965.1"/>
    <property type="molecule type" value="Genomic_DNA"/>
</dbReference>
<dbReference type="EMBL" id="AK229602">
    <property type="protein sequence ID" value="BAF01449.1"/>
    <property type="molecule type" value="mRNA"/>
</dbReference>
<dbReference type="RefSeq" id="NP_188380.1">
    <property type="nucleotide sequence ID" value="NM_112633.2"/>
</dbReference>
<dbReference type="PaxDb" id="3702-AT3G17530.1"/>
<dbReference type="EnsemblPlants" id="AT3G17530.1">
    <property type="protein sequence ID" value="AT3G17530.1"/>
    <property type="gene ID" value="AT3G17530"/>
</dbReference>
<dbReference type="GeneID" id="821019"/>
<dbReference type="Gramene" id="AT3G17530.1">
    <property type="protein sequence ID" value="AT3G17530.1"/>
    <property type="gene ID" value="AT3G17530"/>
</dbReference>
<dbReference type="KEGG" id="ath:AT3G17530"/>
<dbReference type="Araport" id="AT3G17530"/>
<dbReference type="TAIR" id="AT3G17530"/>
<dbReference type="HOGENOM" id="CLU_034692_1_0_1"/>
<dbReference type="InParanoid" id="Q9LUP5"/>
<dbReference type="OMA" id="REMIVLM"/>
<dbReference type="PRO" id="PR:Q9LUP5"/>
<dbReference type="Proteomes" id="UP000006548">
    <property type="component" value="Chromosome 3"/>
</dbReference>
<dbReference type="ExpressionAtlas" id="Q9LUP5">
    <property type="expression patterns" value="baseline and differential"/>
</dbReference>
<dbReference type="CDD" id="cd22157">
    <property type="entry name" value="F-box_AtFBW1-like"/>
    <property type="match status" value="1"/>
</dbReference>
<dbReference type="Gene3D" id="1.20.1280.50">
    <property type="match status" value="1"/>
</dbReference>
<dbReference type="InterPro" id="IPR006527">
    <property type="entry name" value="F-box-assoc_dom_typ1"/>
</dbReference>
<dbReference type="InterPro" id="IPR017451">
    <property type="entry name" value="F-box-assoc_interact_dom"/>
</dbReference>
<dbReference type="InterPro" id="IPR036047">
    <property type="entry name" value="F-box-like_dom_sf"/>
</dbReference>
<dbReference type="InterPro" id="IPR001810">
    <property type="entry name" value="F-box_dom"/>
</dbReference>
<dbReference type="InterPro" id="IPR011043">
    <property type="entry name" value="Gal_Oxase/kelch_b-propeller"/>
</dbReference>
<dbReference type="InterPro" id="IPR050796">
    <property type="entry name" value="SCF_F-box_component"/>
</dbReference>
<dbReference type="NCBIfam" id="TIGR01640">
    <property type="entry name" value="F_box_assoc_1"/>
    <property type="match status" value="1"/>
</dbReference>
<dbReference type="PANTHER" id="PTHR31672">
    <property type="entry name" value="BNACNNG10540D PROTEIN"/>
    <property type="match status" value="1"/>
</dbReference>
<dbReference type="Pfam" id="PF00646">
    <property type="entry name" value="F-box"/>
    <property type="match status" value="1"/>
</dbReference>
<dbReference type="Pfam" id="PF07734">
    <property type="entry name" value="FBA_1"/>
    <property type="match status" value="1"/>
</dbReference>
<dbReference type="SMART" id="SM00256">
    <property type="entry name" value="FBOX"/>
    <property type="match status" value="1"/>
</dbReference>
<dbReference type="SUPFAM" id="SSF81383">
    <property type="entry name" value="F-box domain"/>
    <property type="match status" value="1"/>
</dbReference>
<dbReference type="SUPFAM" id="SSF50965">
    <property type="entry name" value="Galactose oxidase, central domain"/>
    <property type="match status" value="1"/>
</dbReference>
<dbReference type="PROSITE" id="PS50181">
    <property type="entry name" value="FBOX"/>
    <property type="match status" value="1"/>
</dbReference>
<proteinExistence type="evidence at transcript level"/>
<name>FBK59_ARATH</name>
<accession>Q9LUP5</accession>
<accession>Q0WN51</accession>
<feature type="chain" id="PRO_0000283219" description="F-box/kelch-repeat protein At3g17530">
    <location>
        <begin position="1"/>
        <end position="388"/>
    </location>
</feature>
<feature type="domain" description="F-box" evidence="1">
    <location>
        <begin position="1"/>
        <end position="50"/>
    </location>
</feature>
<feature type="repeat" description="Kelch 1">
    <location>
        <begin position="163"/>
        <end position="208"/>
    </location>
</feature>
<feature type="repeat" description="Kelch 2">
    <location>
        <begin position="336"/>
        <end position="383"/>
    </location>
</feature>
<feature type="sequence conflict" description="In Ref. 3; BAF01449." evidence="2" ref="3">
    <original>YQ</original>
    <variation>LE</variation>
    <location>
        <begin position="241"/>
        <end position="242"/>
    </location>
</feature>
<protein>
    <recommendedName>
        <fullName>F-box/kelch-repeat protein At3g17530</fullName>
    </recommendedName>
</protein>
<gene>
    <name type="ordered locus">At3g17530</name>
    <name type="ORF">MKP6.8</name>
</gene>
<comment type="sequence caution" evidence="2">
    <conflict type="erroneous initiation">
        <sequence resource="EMBL-CDS" id="BAB02042"/>
    </conflict>
    <text>Extended N-terminus.</text>
</comment>
<organism>
    <name type="scientific">Arabidopsis thaliana</name>
    <name type="common">Mouse-ear cress</name>
    <dbReference type="NCBI Taxonomy" id="3702"/>
    <lineage>
        <taxon>Eukaryota</taxon>
        <taxon>Viridiplantae</taxon>
        <taxon>Streptophyta</taxon>
        <taxon>Embryophyta</taxon>
        <taxon>Tracheophyta</taxon>
        <taxon>Spermatophyta</taxon>
        <taxon>Magnoliopsida</taxon>
        <taxon>eudicotyledons</taxon>
        <taxon>Gunneridae</taxon>
        <taxon>Pentapetalae</taxon>
        <taxon>rosids</taxon>
        <taxon>malvids</taxon>
        <taxon>Brassicales</taxon>
        <taxon>Brassicaceae</taxon>
        <taxon>Camelineae</taxon>
        <taxon>Arabidopsis</taxon>
    </lineage>
</organism>
<sequence>MMISDLPHDLESEILSRVPAKSLAKWKTTCKRWYALFRDPSFVKKNFDKAGGREMIVLMNSRVYSNSVNLQGINNRFDPSMEVTGKLIKLNDSKGVDISAIFHCDGLILCTTTESTGLVVWNPCTGEIRCIKPRIFYRCNDRYALGYGNSKSSCHSYKILRSCCYYVDQNLSLMAAEFEIYDFSTDSWRDLGDITRDMIVYSSGVSLKGNTYWVSGSKEKGFFMRYFDFSKEVFGRLPLPYQSFNANHTAALSAVGNEKIAVLQQKILAMSDEMRIWVTNKIDEAKDLSWSNFLLTVDYGKFNLPCLVNVTSFLLDEENKVAVCSDVDTKDGLRSRIYIVGKDFYKEVFKDTRGSDNNWPLLLCYVPSLVSIQENIPNKAEENEIKGG</sequence>
<evidence type="ECO:0000255" key="1">
    <source>
        <dbReference type="PROSITE-ProRule" id="PRU00080"/>
    </source>
</evidence>
<evidence type="ECO:0000305" key="2"/>
<reference key="1">
    <citation type="journal article" date="2000" name="DNA Res.">
        <title>Structural analysis of Arabidopsis thaliana chromosome 3. I. Sequence features of the regions of 4,504,864 bp covered by sixty P1 and TAC clones.</title>
        <authorList>
            <person name="Sato S."/>
            <person name="Nakamura Y."/>
            <person name="Kaneko T."/>
            <person name="Katoh T."/>
            <person name="Asamizu E."/>
            <person name="Tabata S."/>
        </authorList>
    </citation>
    <scope>NUCLEOTIDE SEQUENCE [LARGE SCALE GENOMIC DNA]</scope>
    <source>
        <strain>cv. Columbia</strain>
    </source>
</reference>
<reference key="2">
    <citation type="journal article" date="2017" name="Plant J.">
        <title>Araport11: a complete reannotation of the Arabidopsis thaliana reference genome.</title>
        <authorList>
            <person name="Cheng C.Y."/>
            <person name="Krishnakumar V."/>
            <person name="Chan A.P."/>
            <person name="Thibaud-Nissen F."/>
            <person name="Schobel S."/>
            <person name="Town C.D."/>
        </authorList>
    </citation>
    <scope>GENOME REANNOTATION</scope>
    <source>
        <strain>cv. Columbia</strain>
    </source>
</reference>
<reference key="3">
    <citation type="submission" date="2006-07" db="EMBL/GenBank/DDBJ databases">
        <title>Large-scale analysis of RIKEN Arabidopsis full-length (RAFL) cDNAs.</title>
        <authorList>
            <person name="Totoki Y."/>
            <person name="Seki M."/>
            <person name="Ishida J."/>
            <person name="Nakajima M."/>
            <person name="Enju A."/>
            <person name="Kamiya A."/>
            <person name="Narusaka M."/>
            <person name="Shin-i T."/>
            <person name="Nakagawa M."/>
            <person name="Sakamoto N."/>
            <person name="Oishi K."/>
            <person name="Kohara Y."/>
            <person name="Kobayashi M."/>
            <person name="Toyoda A."/>
            <person name="Sakaki Y."/>
            <person name="Sakurai T."/>
            <person name="Iida K."/>
            <person name="Akiyama K."/>
            <person name="Satou M."/>
            <person name="Toyoda T."/>
            <person name="Konagaya A."/>
            <person name="Carninci P."/>
            <person name="Kawai J."/>
            <person name="Hayashizaki Y."/>
            <person name="Shinozaki K."/>
        </authorList>
    </citation>
    <scope>NUCLEOTIDE SEQUENCE [LARGE SCALE MRNA] OF 241-388</scope>
    <source>
        <strain>cv. Columbia</strain>
    </source>
</reference>